<name>AAEA_SALPA</name>
<dbReference type="EMBL" id="CP000026">
    <property type="protein sequence ID" value="AAV79055.1"/>
    <property type="molecule type" value="Genomic_DNA"/>
</dbReference>
<dbReference type="RefSeq" id="WP_000855134.1">
    <property type="nucleotide sequence ID" value="NC_006511.1"/>
</dbReference>
<dbReference type="SMR" id="Q5PJT8"/>
<dbReference type="KEGG" id="spt:SPA3232"/>
<dbReference type="HOGENOM" id="CLU_018816_15_2_6"/>
<dbReference type="Proteomes" id="UP000008185">
    <property type="component" value="Chromosome"/>
</dbReference>
<dbReference type="GO" id="GO:0005886">
    <property type="term" value="C:plasma membrane"/>
    <property type="evidence" value="ECO:0007669"/>
    <property type="project" value="UniProtKB-SubCell"/>
</dbReference>
<dbReference type="GO" id="GO:0022857">
    <property type="term" value="F:transmembrane transporter activity"/>
    <property type="evidence" value="ECO:0007669"/>
    <property type="project" value="UniProtKB-UniRule"/>
</dbReference>
<dbReference type="FunFam" id="2.40.30.170:FF:000002">
    <property type="entry name" value="p-hydroxybenzoic acid efflux pump subunit AaeA"/>
    <property type="match status" value="1"/>
</dbReference>
<dbReference type="FunFam" id="2.40.50.100:FF:000018">
    <property type="entry name" value="p-hydroxybenzoic acid efflux pump subunit AaeA"/>
    <property type="match status" value="1"/>
</dbReference>
<dbReference type="Gene3D" id="2.40.30.170">
    <property type="match status" value="1"/>
</dbReference>
<dbReference type="Gene3D" id="2.40.50.100">
    <property type="match status" value="1"/>
</dbReference>
<dbReference type="HAMAP" id="MF_01544">
    <property type="entry name" value="AaeA"/>
    <property type="match status" value="1"/>
</dbReference>
<dbReference type="InterPro" id="IPR043602">
    <property type="entry name" value="CusB-like_dom_1"/>
</dbReference>
<dbReference type="InterPro" id="IPR032317">
    <property type="entry name" value="CusB_D23"/>
</dbReference>
<dbReference type="InterPro" id="IPR050393">
    <property type="entry name" value="MFP_Efflux_Pump"/>
</dbReference>
<dbReference type="InterPro" id="IPR022871">
    <property type="entry name" value="PHBA_efflux_pump_AaeA"/>
</dbReference>
<dbReference type="InterPro" id="IPR006143">
    <property type="entry name" value="RND_pump_MFP"/>
</dbReference>
<dbReference type="NCBIfam" id="NF007850">
    <property type="entry name" value="PRK10559.1"/>
    <property type="match status" value="1"/>
</dbReference>
<dbReference type="NCBIfam" id="TIGR01730">
    <property type="entry name" value="RND_mfp"/>
    <property type="match status" value="1"/>
</dbReference>
<dbReference type="PANTHER" id="PTHR30367:SF12">
    <property type="entry name" value="P-HYDROXYBENZOIC ACID EFFLUX PUMP SUBUNIT AAEA"/>
    <property type="match status" value="1"/>
</dbReference>
<dbReference type="PANTHER" id="PTHR30367">
    <property type="entry name" value="P-HYDROXYBENZOIC ACID EFFLUX PUMP SUBUNIT AAEA-RELATED"/>
    <property type="match status" value="1"/>
</dbReference>
<dbReference type="Pfam" id="PF00529">
    <property type="entry name" value="CusB_dom_1"/>
    <property type="match status" value="1"/>
</dbReference>
<dbReference type="Pfam" id="PF16576">
    <property type="entry name" value="HlyD_D23"/>
    <property type="match status" value="1"/>
</dbReference>
<dbReference type="SUPFAM" id="SSF111369">
    <property type="entry name" value="HlyD-like secretion proteins"/>
    <property type="match status" value="1"/>
</dbReference>
<reference key="1">
    <citation type="journal article" date="2004" name="Nat. Genet.">
        <title>Comparison of genome degradation in Paratyphi A and Typhi, human-restricted serovars of Salmonella enterica that cause typhoid.</title>
        <authorList>
            <person name="McClelland M."/>
            <person name="Sanderson K.E."/>
            <person name="Clifton S.W."/>
            <person name="Latreille P."/>
            <person name="Porwollik S."/>
            <person name="Sabo A."/>
            <person name="Meyer R."/>
            <person name="Bieri T."/>
            <person name="Ozersky P."/>
            <person name="McLellan M."/>
            <person name="Harkins C.R."/>
            <person name="Wang C."/>
            <person name="Nguyen C."/>
            <person name="Berghoff A."/>
            <person name="Elliott G."/>
            <person name="Kohlberg S."/>
            <person name="Strong C."/>
            <person name="Du F."/>
            <person name="Carter J."/>
            <person name="Kremizki C."/>
            <person name="Layman D."/>
            <person name="Leonard S."/>
            <person name="Sun H."/>
            <person name="Fulton L."/>
            <person name="Nash W."/>
            <person name="Miner T."/>
            <person name="Minx P."/>
            <person name="Delehaunty K."/>
            <person name="Fronick C."/>
            <person name="Magrini V."/>
            <person name="Nhan M."/>
            <person name="Warren W."/>
            <person name="Florea L."/>
            <person name="Spieth J."/>
            <person name="Wilson R.K."/>
        </authorList>
    </citation>
    <scope>NUCLEOTIDE SEQUENCE [LARGE SCALE GENOMIC DNA]</scope>
    <source>
        <strain>ATCC 9150 / SARB42</strain>
    </source>
</reference>
<comment type="function">
    <text evidence="1">Forms an efflux pump with AaeB.</text>
</comment>
<comment type="subcellular location">
    <subcellularLocation>
        <location evidence="1">Cell inner membrane</location>
        <topology evidence="1">Single-pass membrane protein</topology>
    </subcellularLocation>
</comment>
<comment type="similarity">
    <text evidence="1">Belongs to the membrane fusion protein (MFP) (TC 8.A.1) family.</text>
</comment>
<accession>Q5PJT8</accession>
<keyword id="KW-0997">Cell inner membrane</keyword>
<keyword id="KW-1003">Cell membrane</keyword>
<keyword id="KW-0472">Membrane</keyword>
<keyword id="KW-0812">Transmembrane</keyword>
<keyword id="KW-1133">Transmembrane helix</keyword>
<keyword id="KW-0813">Transport</keyword>
<organism>
    <name type="scientific">Salmonella paratyphi A (strain ATCC 9150 / SARB42)</name>
    <dbReference type="NCBI Taxonomy" id="295319"/>
    <lineage>
        <taxon>Bacteria</taxon>
        <taxon>Pseudomonadati</taxon>
        <taxon>Pseudomonadota</taxon>
        <taxon>Gammaproteobacteria</taxon>
        <taxon>Enterobacterales</taxon>
        <taxon>Enterobacteriaceae</taxon>
        <taxon>Salmonella</taxon>
    </lineage>
</organism>
<proteinExistence type="inferred from homology"/>
<protein>
    <recommendedName>
        <fullName evidence="1">p-hydroxybenzoic acid efflux pump subunit AaeA</fullName>
        <shortName evidence="1">pHBA efflux pump protein A</shortName>
    </recommendedName>
</protein>
<sequence length="310" mass="34545">MKTLTRKLSRTAITLVLVILAFIAIFRAWVYYTESPWTRDARFSADVVAIAPDVAGLITHVNVHDNQLVKKDQVLFTIDQPRYQKALAEAEADVAYYQVLAQEKRQEAGRRNRLGVQAMSREEIDQANNVLQTVLHQLAKAQATRDLAKLDLERTVIRAPADGWVTNLNVYAGEFITRGSTAVALVKKNSFYVQAYMEETKLEGVRPGYRAEITPLGSNRVLKGTVDSVAAGVTNASSTSDAKGMATIDSNLEWVRLAQRVPVRIRLDEQQGNLWPAGTTATVVITGKQDRDASQDSFFRKLAHRLREFG</sequence>
<evidence type="ECO:0000255" key="1">
    <source>
        <dbReference type="HAMAP-Rule" id="MF_01544"/>
    </source>
</evidence>
<gene>
    <name evidence="1" type="primary">aaeA</name>
    <name type="ordered locus">SPA3232</name>
</gene>
<feature type="chain" id="PRO_0000201854" description="p-hydroxybenzoic acid efflux pump subunit AaeA">
    <location>
        <begin position="1"/>
        <end position="310"/>
    </location>
</feature>
<feature type="transmembrane region" description="Helical" evidence="1">
    <location>
        <begin position="12"/>
        <end position="32"/>
    </location>
</feature>